<proteinExistence type="inferred from homology"/>
<name>CARA_STAEQ</name>
<comment type="function">
    <text evidence="1">Small subunit of the glutamine-dependent carbamoyl phosphate synthetase (CPSase). CPSase catalyzes the formation of carbamoyl phosphate from the ammonia moiety of glutamine, carbonate, and phosphate donated by ATP, constituting the first step of 2 biosynthetic pathways, one leading to arginine and/or urea and the other to pyrimidine nucleotides. The small subunit (glutamine amidotransferase) binds and cleaves glutamine to supply the large subunit with the substrate ammonia.</text>
</comment>
<comment type="catalytic activity">
    <reaction evidence="1">
        <text>hydrogencarbonate + L-glutamine + 2 ATP + H2O = carbamoyl phosphate + L-glutamate + 2 ADP + phosphate + 2 H(+)</text>
        <dbReference type="Rhea" id="RHEA:18633"/>
        <dbReference type="ChEBI" id="CHEBI:15377"/>
        <dbReference type="ChEBI" id="CHEBI:15378"/>
        <dbReference type="ChEBI" id="CHEBI:17544"/>
        <dbReference type="ChEBI" id="CHEBI:29985"/>
        <dbReference type="ChEBI" id="CHEBI:30616"/>
        <dbReference type="ChEBI" id="CHEBI:43474"/>
        <dbReference type="ChEBI" id="CHEBI:58228"/>
        <dbReference type="ChEBI" id="CHEBI:58359"/>
        <dbReference type="ChEBI" id="CHEBI:456216"/>
        <dbReference type="EC" id="6.3.5.5"/>
    </reaction>
</comment>
<comment type="catalytic activity">
    <molecule>Carbamoyl phosphate synthase small chain</molecule>
    <reaction evidence="1">
        <text>L-glutamine + H2O = L-glutamate + NH4(+)</text>
        <dbReference type="Rhea" id="RHEA:15889"/>
        <dbReference type="ChEBI" id="CHEBI:15377"/>
        <dbReference type="ChEBI" id="CHEBI:28938"/>
        <dbReference type="ChEBI" id="CHEBI:29985"/>
        <dbReference type="ChEBI" id="CHEBI:58359"/>
    </reaction>
</comment>
<comment type="pathway">
    <text evidence="1">Amino-acid biosynthesis; L-arginine biosynthesis; carbamoyl phosphate from bicarbonate: step 1/1.</text>
</comment>
<comment type="pathway">
    <text evidence="1">Pyrimidine metabolism; UMP biosynthesis via de novo pathway; (S)-dihydroorotate from bicarbonate: step 1/3.</text>
</comment>
<comment type="subunit">
    <text evidence="1">Composed of two chains; the small (or glutamine) chain promotes the hydrolysis of glutamine to ammonia, which is used by the large (or ammonia) chain to synthesize carbamoyl phosphate. Tetramer of heterodimers (alpha,beta)4.</text>
</comment>
<comment type="similarity">
    <text evidence="1">Belongs to the CarA family.</text>
</comment>
<feature type="chain" id="PRO_0000112322" description="Carbamoyl phosphate synthase small chain">
    <location>
        <begin position="1"/>
        <end position="366"/>
    </location>
</feature>
<feature type="domain" description="Glutamine amidotransferase type-1" evidence="1">
    <location>
        <begin position="173"/>
        <end position="360"/>
    </location>
</feature>
<feature type="region of interest" description="CPSase" evidence="1">
    <location>
        <begin position="1"/>
        <end position="171"/>
    </location>
</feature>
<feature type="active site" description="Nucleophile" evidence="1">
    <location>
        <position position="248"/>
    </location>
</feature>
<feature type="active site" evidence="1">
    <location>
        <position position="333"/>
    </location>
</feature>
<feature type="active site" evidence="1">
    <location>
        <position position="335"/>
    </location>
</feature>
<feature type="binding site" evidence="1">
    <location>
        <position position="47"/>
    </location>
    <ligand>
        <name>L-glutamine</name>
        <dbReference type="ChEBI" id="CHEBI:58359"/>
    </ligand>
</feature>
<feature type="binding site" evidence="1">
    <location>
        <position position="221"/>
    </location>
    <ligand>
        <name>L-glutamine</name>
        <dbReference type="ChEBI" id="CHEBI:58359"/>
    </ligand>
</feature>
<feature type="binding site" evidence="1">
    <location>
        <position position="223"/>
    </location>
    <ligand>
        <name>L-glutamine</name>
        <dbReference type="ChEBI" id="CHEBI:58359"/>
    </ligand>
</feature>
<feature type="binding site" evidence="1">
    <location>
        <position position="249"/>
    </location>
    <ligand>
        <name>L-glutamine</name>
        <dbReference type="ChEBI" id="CHEBI:58359"/>
    </ligand>
</feature>
<feature type="binding site" evidence="1">
    <location>
        <position position="252"/>
    </location>
    <ligand>
        <name>L-glutamine</name>
        <dbReference type="ChEBI" id="CHEBI:58359"/>
    </ligand>
</feature>
<feature type="binding site" evidence="1">
    <location>
        <position position="290"/>
    </location>
    <ligand>
        <name>L-glutamine</name>
        <dbReference type="ChEBI" id="CHEBI:58359"/>
    </ligand>
</feature>
<feature type="binding site" evidence="1">
    <location>
        <position position="292"/>
    </location>
    <ligand>
        <name>L-glutamine</name>
        <dbReference type="ChEBI" id="CHEBI:58359"/>
    </ligand>
</feature>
<feature type="binding site" evidence="1">
    <location>
        <position position="293"/>
    </location>
    <ligand>
        <name>L-glutamine</name>
        <dbReference type="ChEBI" id="CHEBI:58359"/>
    </ligand>
</feature>
<accession>Q5HPY9</accession>
<dbReference type="EC" id="6.3.5.5" evidence="1"/>
<dbReference type="EMBL" id="CP000029">
    <property type="protein sequence ID" value="AAW54171.1"/>
    <property type="molecule type" value="Genomic_DNA"/>
</dbReference>
<dbReference type="RefSeq" id="WP_002446244.1">
    <property type="nucleotide sequence ID" value="NC_002976.3"/>
</dbReference>
<dbReference type="SMR" id="Q5HPY9"/>
<dbReference type="STRING" id="176279.SERP0768"/>
<dbReference type="MEROPS" id="C26.963"/>
<dbReference type="KEGG" id="ser:SERP0768"/>
<dbReference type="eggNOG" id="COG0505">
    <property type="taxonomic scope" value="Bacteria"/>
</dbReference>
<dbReference type="HOGENOM" id="CLU_035901_2_1_9"/>
<dbReference type="UniPathway" id="UPA00068">
    <property type="reaction ID" value="UER00171"/>
</dbReference>
<dbReference type="UniPathway" id="UPA00070">
    <property type="reaction ID" value="UER00115"/>
</dbReference>
<dbReference type="Proteomes" id="UP000000531">
    <property type="component" value="Chromosome"/>
</dbReference>
<dbReference type="GO" id="GO:0005524">
    <property type="term" value="F:ATP binding"/>
    <property type="evidence" value="ECO:0007669"/>
    <property type="project" value="UniProtKB-UniRule"/>
</dbReference>
<dbReference type="GO" id="GO:0004088">
    <property type="term" value="F:carbamoyl-phosphate synthase (glutamine-hydrolyzing) activity"/>
    <property type="evidence" value="ECO:0007669"/>
    <property type="project" value="UniProtKB-UniRule"/>
</dbReference>
<dbReference type="GO" id="GO:0004359">
    <property type="term" value="F:glutaminase activity"/>
    <property type="evidence" value="ECO:0007669"/>
    <property type="project" value="RHEA"/>
</dbReference>
<dbReference type="GO" id="GO:0006207">
    <property type="term" value="P:'de novo' pyrimidine nucleobase biosynthetic process"/>
    <property type="evidence" value="ECO:0007669"/>
    <property type="project" value="InterPro"/>
</dbReference>
<dbReference type="GO" id="GO:0044205">
    <property type="term" value="P:'de novo' UMP biosynthetic process"/>
    <property type="evidence" value="ECO:0007669"/>
    <property type="project" value="UniProtKB-UniRule"/>
</dbReference>
<dbReference type="GO" id="GO:0006541">
    <property type="term" value="P:glutamine metabolic process"/>
    <property type="evidence" value="ECO:0007669"/>
    <property type="project" value="InterPro"/>
</dbReference>
<dbReference type="GO" id="GO:0006526">
    <property type="term" value="P:L-arginine biosynthetic process"/>
    <property type="evidence" value="ECO:0007669"/>
    <property type="project" value="UniProtKB-UniRule"/>
</dbReference>
<dbReference type="CDD" id="cd01744">
    <property type="entry name" value="GATase1_CPSase"/>
    <property type="match status" value="1"/>
</dbReference>
<dbReference type="FunFam" id="3.40.50.880:FF:000029">
    <property type="entry name" value="Carbamoyl-phosphate synthase small chain"/>
    <property type="match status" value="1"/>
</dbReference>
<dbReference type="FunFam" id="3.50.30.20:FF:000001">
    <property type="entry name" value="Carbamoyl-phosphate synthase small chain"/>
    <property type="match status" value="1"/>
</dbReference>
<dbReference type="Gene3D" id="3.40.50.880">
    <property type="match status" value="1"/>
</dbReference>
<dbReference type="Gene3D" id="3.50.30.20">
    <property type="entry name" value="Carbamoyl-phosphate synthase small subunit, N-terminal domain"/>
    <property type="match status" value="1"/>
</dbReference>
<dbReference type="HAMAP" id="MF_01209">
    <property type="entry name" value="CPSase_S_chain"/>
    <property type="match status" value="1"/>
</dbReference>
<dbReference type="InterPro" id="IPR050472">
    <property type="entry name" value="Anth_synth/Amidotransfase"/>
</dbReference>
<dbReference type="InterPro" id="IPR006274">
    <property type="entry name" value="CarbamoylP_synth_ssu"/>
</dbReference>
<dbReference type="InterPro" id="IPR002474">
    <property type="entry name" value="CarbamoylP_synth_ssu_N"/>
</dbReference>
<dbReference type="InterPro" id="IPR036480">
    <property type="entry name" value="CarbP_synth_ssu_N_sf"/>
</dbReference>
<dbReference type="InterPro" id="IPR029062">
    <property type="entry name" value="Class_I_gatase-like"/>
</dbReference>
<dbReference type="InterPro" id="IPR035686">
    <property type="entry name" value="CPSase_GATase1"/>
</dbReference>
<dbReference type="InterPro" id="IPR017926">
    <property type="entry name" value="GATASE"/>
</dbReference>
<dbReference type="NCBIfam" id="TIGR01368">
    <property type="entry name" value="CPSaseIIsmall"/>
    <property type="match status" value="1"/>
</dbReference>
<dbReference type="NCBIfam" id="NF009475">
    <property type="entry name" value="PRK12838.1"/>
    <property type="match status" value="1"/>
</dbReference>
<dbReference type="PANTHER" id="PTHR43418:SF7">
    <property type="entry name" value="CARBAMOYL-PHOSPHATE SYNTHASE SMALL CHAIN"/>
    <property type="match status" value="1"/>
</dbReference>
<dbReference type="PANTHER" id="PTHR43418">
    <property type="entry name" value="MULTIFUNCTIONAL TRYPTOPHAN BIOSYNTHESIS PROTEIN-RELATED"/>
    <property type="match status" value="1"/>
</dbReference>
<dbReference type="Pfam" id="PF00988">
    <property type="entry name" value="CPSase_sm_chain"/>
    <property type="match status" value="1"/>
</dbReference>
<dbReference type="Pfam" id="PF00117">
    <property type="entry name" value="GATase"/>
    <property type="match status" value="1"/>
</dbReference>
<dbReference type="PRINTS" id="PR00097">
    <property type="entry name" value="ANTSNTHASEII"/>
</dbReference>
<dbReference type="PRINTS" id="PR00099">
    <property type="entry name" value="CPSGATASE"/>
</dbReference>
<dbReference type="PRINTS" id="PR00096">
    <property type="entry name" value="GATASE"/>
</dbReference>
<dbReference type="SMART" id="SM01097">
    <property type="entry name" value="CPSase_sm_chain"/>
    <property type="match status" value="1"/>
</dbReference>
<dbReference type="SUPFAM" id="SSF52021">
    <property type="entry name" value="Carbamoyl phosphate synthetase, small subunit N-terminal domain"/>
    <property type="match status" value="1"/>
</dbReference>
<dbReference type="SUPFAM" id="SSF52317">
    <property type="entry name" value="Class I glutamine amidotransferase-like"/>
    <property type="match status" value="1"/>
</dbReference>
<dbReference type="PROSITE" id="PS51273">
    <property type="entry name" value="GATASE_TYPE_1"/>
    <property type="match status" value="1"/>
</dbReference>
<evidence type="ECO:0000255" key="1">
    <source>
        <dbReference type="HAMAP-Rule" id="MF_01209"/>
    </source>
</evidence>
<keyword id="KW-0028">Amino-acid biosynthesis</keyword>
<keyword id="KW-0055">Arginine biosynthesis</keyword>
<keyword id="KW-0067">ATP-binding</keyword>
<keyword id="KW-0315">Glutamine amidotransferase</keyword>
<keyword id="KW-0436">Ligase</keyword>
<keyword id="KW-0547">Nucleotide-binding</keyword>
<keyword id="KW-0665">Pyrimidine biosynthesis</keyword>
<keyword id="KW-1185">Reference proteome</keyword>
<sequence length="366" mass="40821">MLEKRYLVLEDGSYYEGYRLGSDDLSIGEIVFNTAMTGYQETISDPSYTGQIITFTYPLIGNYGINRDDFESLTPKLNGVVVKEASTHPSNFRHQKTLHETLAQYHIPGISGVDTRSITRKIRNHGVLRAGFTDNKDNIQELVEQLKTAELPRDEVQTVSTKTPYVSTGSDLSVVLLDFGKKQNIVRELNLRGCNVTVVPYDTSAEEILSMSPDGVMLSNGPGDPDEVDVALDMIRGILGKIPFFGICLGHQLFALSQGATSFKMKFGHRGANHPVKDLRTGKIDITSQNHGYSIDRDSLKNTDLEVTHIALNDGTVEGLRHKELPAFSVQYHPEARPGPSDSNYLFDEFITMMKDFKEKERQINA</sequence>
<organism>
    <name type="scientific">Staphylococcus epidermidis (strain ATCC 35984 / DSM 28319 / BCRC 17069 / CCUG 31568 / BM 3577 / RP62A)</name>
    <dbReference type="NCBI Taxonomy" id="176279"/>
    <lineage>
        <taxon>Bacteria</taxon>
        <taxon>Bacillati</taxon>
        <taxon>Bacillota</taxon>
        <taxon>Bacilli</taxon>
        <taxon>Bacillales</taxon>
        <taxon>Staphylococcaceae</taxon>
        <taxon>Staphylococcus</taxon>
    </lineage>
</organism>
<gene>
    <name evidence="1" type="primary">carA</name>
    <name type="ordered locus">SERP0768</name>
</gene>
<reference key="1">
    <citation type="journal article" date="2005" name="J. Bacteriol.">
        <title>Insights on evolution of virulence and resistance from the complete genome analysis of an early methicillin-resistant Staphylococcus aureus strain and a biofilm-producing methicillin-resistant Staphylococcus epidermidis strain.</title>
        <authorList>
            <person name="Gill S.R."/>
            <person name="Fouts D.E."/>
            <person name="Archer G.L."/>
            <person name="Mongodin E.F."/>
            <person name="DeBoy R.T."/>
            <person name="Ravel J."/>
            <person name="Paulsen I.T."/>
            <person name="Kolonay J.F."/>
            <person name="Brinkac L.M."/>
            <person name="Beanan M.J."/>
            <person name="Dodson R.J."/>
            <person name="Daugherty S.C."/>
            <person name="Madupu R."/>
            <person name="Angiuoli S.V."/>
            <person name="Durkin A.S."/>
            <person name="Haft D.H."/>
            <person name="Vamathevan J.J."/>
            <person name="Khouri H."/>
            <person name="Utterback T.R."/>
            <person name="Lee C."/>
            <person name="Dimitrov G."/>
            <person name="Jiang L."/>
            <person name="Qin H."/>
            <person name="Weidman J."/>
            <person name="Tran K."/>
            <person name="Kang K.H."/>
            <person name="Hance I.R."/>
            <person name="Nelson K.E."/>
            <person name="Fraser C.M."/>
        </authorList>
    </citation>
    <scope>NUCLEOTIDE SEQUENCE [LARGE SCALE GENOMIC DNA]</scope>
    <source>
        <strain>ATCC 35984 / DSM 28319 / BCRC 17069 / CCUG 31568 / BM 3577 / RP62A</strain>
    </source>
</reference>
<protein>
    <recommendedName>
        <fullName evidence="1">Carbamoyl phosphate synthase small chain</fullName>
        <ecNumber evidence="1">6.3.5.5</ecNumber>
    </recommendedName>
    <alternativeName>
        <fullName evidence="1">Carbamoyl phosphate synthetase glutamine chain</fullName>
    </alternativeName>
</protein>